<reference key="1">
    <citation type="journal article" date="2000" name="Science">
        <title>Complete genome sequence of Neisseria meningitidis serogroup B strain MC58.</title>
        <authorList>
            <person name="Tettelin H."/>
            <person name="Saunders N.J."/>
            <person name="Heidelberg J.F."/>
            <person name="Jeffries A.C."/>
            <person name="Nelson K.E."/>
            <person name="Eisen J.A."/>
            <person name="Ketchum K.A."/>
            <person name="Hood D.W."/>
            <person name="Peden J.F."/>
            <person name="Dodson R.J."/>
            <person name="Nelson W.C."/>
            <person name="Gwinn M.L."/>
            <person name="DeBoy R.T."/>
            <person name="Peterson J.D."/>
            <person name="Hickey E.K."/>
            <person name="Haft D.H."/>
            <person name="Salzberg S.L."/>
            <person name="White O."/>
            <person name="Fleischmann R.D."/>
            <person name="Dougherty B.A."/>
            <person name="Mason T.M."/>
            <person name="Ciecko A."/>
            <person name="Parksey D.S."/>
            <person name="Blair E."/>
            <person name="Cittone H."/>
            <person name="Clark E.B."/>
            <person name="Cotton M.D."/>
            <person name="Utterback T.R."/>
            <person name="Khouri H.M."/>
            <person name="Qin H."/>
            <person name="Vamathevan J.J."/>
            <person name="Gill J."/>
            <person name="Scarlato V."/>
            <person name="Masignani V."/>
            <person name="Pizza M."/>
            <person name="Grandi G."/>
            <person name="Sun L."/>
            <person name="Smith H.O."/>
            <person name="Fraser C.M."/>
            <person name="Moxon E.R."/>
            <person name="Rappuoli R."/>
            <person name="Venter J.C."/>
        </authorList>
    </citation>
    <scope>NUCLEOTIDE SEQUENCE [LARGE SCALE GENOMIC DNA]</scope>
    <source>
        <strain>ATCC BAA-335 / MC58</strain>
    </source>
</reference>
<reference key="2">
    <citation type="journal article" date="2006" name="Proteomics">
        <title>Proteomic analysis of a meningococcal outer membrane vesicle vaccine prepared from the group B strain NZ98/254.</title>
        <authorList>
            <person name="Vipond C."/>
            <person name="Suker J."/>
            <person name="Jones C."/>
            <person name="Tang C."/>
            <person name="Feavers I.M."/>
            <person name="Wheeler J.X."/>
        </authorList>
    </citation>
    <scope>IDENTIFICATION BY MASS SPECTROMETRY [LARGE SCALE ANALYSIS]</scope>
    <source>
        <strain>NZ98/254 / Serogroup B</strain>
    </source>
</reference>
<feature type="chain" id="PRO_0000320272" description="Septum site-determining protein MinD">
    <location>
        <begin position="1"/>
        <end position="271"/>
    </location>
</feature>
<feature type="binding site" evidence="2">
    <location>
        <begin position="11"/>
        <end position="18"/>
    </location>
    <ligand>
        <name>ATP</name>
        <dbReference type="ChEBI" id="CHEBI:30616"/>
    </ligand>
</feature>
<comment type="function">
    <text evidence="1">ATPase required for the correct placement of the division site. Cell division inhibitors MinC and MinD act in concert to form an inhibitor capable of blocking formation of the polar Z ring septums. Rapidly oscillates between the poles of the cell to destabilize FtsZ filaments that have formed before they mature into polar Z rings (By similarity).</text>
</comment>
<comment type="subunit">
    <text evidence="1">Interacts with MinC and FtsZ.</text>
</comment>
<comment type="subcellular location">
    <subcellularLocation>
        <location evidence="1">Cell inner membrane</location>
        <topology evidence="1">Peripheral membrane protein</topology>
    </subcellularLocation>
</comment>
<comment type="miscellaneous">
    <text>Present in outer membrane vesicle formulations which are used as vaccines in human.</text>
</comment>
<comment type="similarity">
    <text evidence="3">Belongs to the ParA family. MinD subfamily.</text>
</comment>
<evidence type="ECO:0000250" key="1"/>
<evidence type="ECO:0000250" key="2">
    <source>
        <dbReference type="UniProtKB" id="Q72H90"/>
    </source>
</evidence>
<evidence type="ECO:0000305" key="3"/>
<sequence>MAKIIVVTSGKGGVGKTTTSASIATGLALRGYKTAVIDFDVGLRNLDLIMGCERRVVYDLINVIQGEATLNQALIKDKNCENLFILPASQTRDKDALTREGVEKVMQELSGKKMGFEYIICDSPAGIEQGALMALYFADEAIVTTNPEVSSVRDSDRILGILQSKSHKAEQGGSVKEHLLITRYSPERVAKGEMLSVQDICDILHIPLLGVIPESQNVLQASNSGEPVIHQDSVAASEAYKDVIARLLGENREMRFLEAEKKSFFKRLFGG</sequence>
<keyword id="KW-0067">ATP-binding</keyword>
<keyword id="KW-0131">Cell cycle</keyword>
<keyword id="KW-0132">Cell division</keyword>
<keyword id="KW-0997">Cell inner membrane</keyword>
<keyword id="KW-1003">Cell membrane</keyword>
<keyword id="KW-0472">Membrane</keyword>
<keyword id="KW-0547">Nucleotide-binding</keyword>
<keyword id="KW-1185">Reference proteome</keyword>
<keyword id="KW-0717">Septation</keyword>
<proteinExistence type="evidence at protein level"/>
<accession>Q7DDS7</accession>
<dbReference type="EMBL" id="AE002098">
    <property type="protein sequence ID" value="AAF40628.1"/>
    <property type="molecule type" value="Genomic_DNA"/>
</dbReference>
<dbReference type="PIR" id="C81230">
    <property type="entry name" value="C81230"/>
</dbReference>
<dbReference type="RefSeq" id="NP_273229.1">
    <property type="nucleotide sequence ID" value="NC_003112.2"/>
</dbReference>
<dbReference type="RefSeq" id="WP_002215463.1">
    <property type="nucleotide sequence ID" value="NC_003112.2"/>
</dbReference>
<dbReference type="SMR" id="Q7DDS7"/>
<dbReference type="FunCoup" id="Q7DDS7">
    <property type="interactions" value="481"/>
</dbReference>
<dbReference type="STRING" id="122586.NMB0171"/>
<dbReference type="PaxDb" id="122586-NMB0171"/>
<dbReference type="KEGG" id="nme:NMB0171"/>
<dbReference type="PATRIC" id="fig|122586.8.peg.212"/>
<dbReference type="HOGENOM" id="CLU_037612_0_1_4"/>
<dbReference type="InParanoid" id="Q7DDS7"/>
<dbReference type="OrthoDB" id="9773088at2"/>
<dbReference type="Proteomes" id="UP000000425">
    <property type="component" value="Chromosome"/>
</dbReference>
<dbReference type="GO" id="GO:0009898">
    <property type="term" value="C:cytoplasmic side of plasma membrane"/>
    <property type="evidence" value="ECO:0000318"/>
    <property type="project" value="GO_Central"/>
</dbReference>
<dbReference type="GO" id="GO:0005829">
    <property type="term" value="C:cytosol"/>
    <property type="evidence" value="ECO:0000318"/>
    <property type="project" value="GO_Central"/>
</dbReference>
<dbReference type="GO" id="GO:0005524">
    <property type="term" value="F:ATP binding"/>
    <property type="evidence" value="ECO:0000318"/>
    <property type="project" value="GO_Central"/>
</dbReference>
<dbReference type="GO" id="GO:0016887">
    <property type="term" value="F:ATP hydrolysis activity"/>
    <property type="evidence" value="ECO:0000318"/>
    <property type="project" value="GO_Central"/>
</dbReference>
<dbReference type="GO" id="GO:0000917">
    <property type="term" value="P:division septum assembly"/>
    <property type="evidence" value="ECO:0007669"/>
    <property type="project" value="UniProtKB-KW"/>
</dbReference>
<dbReference type="CDD" id="cd02036">
    <property type="entry name" value="MinD"/>
    <property type="match status" value="1"/>
</dbReference>
<dbReference type="FunFam" id="3.40.50.300:FF:000068">
    <property type="entry name" value="Site-determining protein"/>
    <property type="match status" value="1"/>
</dbReference>
<dbReference type="Gene3D" id="3.40.50.300">
    <property type="entry name" value="P-loop containing nucleotide triphosphate hydrolases"/>
    <property type="match status" value="1"/>
</dbReference>
<dbReference type="InterPro" id="IPR002586">
    <property type="entry name" value="CobQ/CobB/MinD/ParA_Nub-bd_dom"/>
</dbReference>
<dbReference type="InterPro" id="IPR010223">
    <property type="entry name" value="MinD"/>
</dbReference>
<dbReference type="InterPro" id="IPR025501">
    <property type="entry name" value="MinD_FleN"/>
</dbReference>
<dbReference type="InterPro" id="IPR027417">
    <property type="entry name" value="P-loop_NTPase"/>
</dbReference>
<dbReference type="InterPro" id="IPR050625">
    <property type="entry name" value="ParA/MinD_ATPase"/>
</dbReference>
<dbReference type="NCBIfam" id="TIGR01968">
    <property type="entry name" value="minD_bact"/>
    <property type="match status" value="1"/>
</dbReference>
<dbReference type="PANTHER" id="PTHR43384:SF6">
    <property type="entry name" value="SEPTUM SITE-DETERMINING PROTEIN MIND HOMOLOG, CHLOROPLASTIC"/>
    <property type="match status" value="1"/>
</dbReference>
<dbReference type="PANTHER" id="PTHR43384">
    <property type="entry name" value="SEPTUM SITE-DETERMINING PROTEIN MIND HOMOLOG, CHLOROPLASTIC-RELATED"/>
    <property type="match status" value="1"/>
</dbReference>
<dbReference type="Pfam" id="PF01656">
    <property type="entry name" value="CbiA"/>
    <property type="match status" value="1"/>
</dbReference>
<dbReference type="PIRSF" id="PIRSF003092">
    <property type="entry name" value="MinD"/>
    <property type="match status" value="1"/>
</dbReference>
<dbReference type="SUPFAM" id="SSF52540">
    <property type="entry name" value="P-loop containing nucleoside triphosphate hydrolases"/>
    <property type="match status" value="1"/>
</dbReference>
<name>MIND_NEIMB</name>
<gene>
    <name type="primary">minD</name>
    <name type="ordered locus">NMB0171</name>
</gene>
<organism>
    <name type="scientific">Neisseria meningitidis serogroup B (strain ATCC BAA-335 / MC58)</name>
    <dbReference type="NCBI Taxonomy" id="122586"/>
    <lineage>
        <taxon>Bacteria</taxon>
        <taxon>Pseudomonadati</taxon>
        <taxon>Pseudomonadota</taxon>
        <taxon>Betaproteobacteria</taxon>
        <taxon>Neisseriales</taxon>
        <taxon>Neisseriaceae</taxon>
        <taxon>Neisseria</taxon>
    </lineage>
</organism>
<protein>
    <recommendedName>
        <fullName>Septum site-determining protein MinD</fullName>
    </recommendedName>
    <alternativeName>
        <fullName>Cell division inhibitor MinD</fullName>
    </alternativeName>
</protein>